<comment type="function">
    <text evidence="6">Involved in photosystem II supercomplex formation and repair, probably acting as a psbB/psbC chaperone on the stromal side of the membrane.</text>
</comment>
<comment type="subunit">
    <text evidence="6">Interacts directly with stromal loops of photosystem II (PSII) core components psbB (CP47) and psbC (CP43). Associates with PSII subcomplexes formed during the PSII repair cycle (e.g. PSII dimers, PSII monomers, CP43-less PSII monomerand PSII reaction centers).</text>
</comment>
<comment type="subcellular location">
    <subcellularLocation>
        <location evidence="6">Plastid</location>
        <location evidence="6">Chloroplast membrane</location>
    </subcellularLocation>
    <subcellularLocation>
        <location evidence="6">Plastid</location>
        <location evidence="6">Chloroplast thylakoid membrane</location>
        <topology evidence="6">Peripheral membrane protein</topology>
        <orientation evidence="6">Stromal side</orientation>
    </subcellularLocation>
    <text evidence="6">In thylakoids, enriched in stroma lamellae, and also present in grana.</text>
</comment>
<comment type="tissue specificity">
    <text evidence="5 6">Expressed in leaves (at protein level) (PubMed:15914918). Mostly expressed in leaves, stems and siliques, and, to a lower extent, in flowers and senescent leaves, but not present in roots (at protein level) (PubMed:25587003).</text>
</comment>
<comment type="induction">
    <text evidence="5 6">Repressed by wounding at the transcript level, but not at the protein level (PubMed:15914918). Strong level decrease during senescence. Low levels observed in etiolated leaves and accumulates rapidly during light-induced greening (PubMed:25587003).</text>
</comment>
<comment type="PTM">
    <text evidence="5">Phosphorylated rapidly (e.g. within 5 minutes) but transiently at threonine and serine residues after wounding.</text>
</comment>
<comment type="disruption phenotype">
    <text evidence="6">Conditional reduced growth in fluctuating white light intensities conditions, with near complete blockage in photosystem II (PSII) supercomplex formation, and concomitant increase of unassembled psbC (CP43), thus leading to reduced PSII efficiency and biomass accumulation. Increased sensitivity to high light conditions, associated with the loss of PSII supercomplexes and accelerated D1 degradation.</text>
</comment>
<comment type="sequence caution" evidence="10">
    <conflict type="erroneous gene model prediction">
        <sequence resource="EMBL-CDS" id="AAD10648"/>
    </conflict>
</comment>
<reference key="1">
    <citation type="journal article" date="2005" name="Biosci. Biotechnol. Biochem.">
        <title>Molecular characterization of the ZKT gene encoding a protein with PDZ, K-Box, and TPR motifs in Arabidopsis.</title>
        <authorList>
            <person name="Ishikawa A."/>
            <person name="Tanaka H."/>
            <person name="Kato C."/>
            <person name="Iwasaki Y."/>
            <person name="Asahi T."/>
        </authorList>
    </citation>
    <scope>NUCLEOTIDE SEQUENCE [MRNA]</scope>
    <scope>REPRESSION BY WOUNDING</scope>
    <scope>PHOSPHORYLATION AFTER WOUNDING</scope>
    <scope>TISSUE SPECIFICITY</scope>
    <source>
        <strain>cv. Columbia</strain>
    </source>
</reference>
<reference key="2">
    <citation type="submission" date="2005-03" db="EMBL/GenBank/DDBJ databases">
        <title>GAN, a novel determinant of drought and salt tolerance in Arabidopsis.</title>
        <authorList>
            <person name="Chen H."/>
            <person name="Huang R."/>
            <person name="Xiong L."/>
        </authorList>
    </citation>
    <scope>NUCLEOTIDE SEQUENCE [MRNA]</scope>
</reference>
<reference key="3">
    <citation type="journal article" date="2000" name="Nature">
        <title>Sequence and analysis of chromosome 1 of the plant Arabidopsis thaliana.</title>
        <authorList>
            <person name="Theologis A."/>
            <person name="Ecker J.R."/>
            <person name="Palm C.J."/>
            <person name="Federspiel N.A."/>
            <person name="Kaul S."/>
            <person name="White O."/>
            <person name="Alonso J."/>
            <person name="Altafi H."/>
            <person name="Araujo R."/>
            <person name="Bowman C.L."/>
            <person name="Brooks S.Y."/>
            <person name="Buehler E."/>
            <person name="Chan A."/>
            <person name="Chao Q."/>
            <person name="Chen H."/>
            <person name="Cheuk R.F."/>
            <person name="Chin C.W."/>
            <person name="Chung M.K."/>
            <person name="Conn L."/>
            <person name="Conway A.B."/>
            <person name="Conway A.R."/>
            <person name="Creasy T.H."/>
            <person name="Dewar K."/>
            <person name="Dunn P."/>
            <person name="Etgu P."/>
            <person name="Feldblyum T.V."/>
            <person name="Feng J.-D."/>
            <person name="Fong B."/>
            <person name="Fujii C.Y."/>
            <person name="Gill J.E."/>
            <person name="Goldsmith A.D."/>
            <person name="Haas B."/>
            <person name="Hansen N.F."/>
            <person name="Hughes B."/>
            <person name="Huizar L."/>
            <person name="Hunter J.L."/>
            <person name="Jenkins J."/>
            <person name="Johnson-Hopson C."/>
            <person name="Khan S."/>
            <person name="Khaykin E."/>
            <person name="Kim C.J."/>
            <person name="Koo H.L."/>
            <person name="Kremenetskaia I."/>
            <person name="Kurtz D.B."/>
            <person name="Kwan A."/>
            <person name="Lam B."/>
            <person name="Langin-Hooper S."/>
            <person name="Lee A."/>
            <person name="Lee J.M."/>
            <person name="Lenz C.A."/>
            <person name="Li J.H."/>
            <person name="Li Y.-P."/>
            <person name="Lin X."/>
            <person name="Liu S.X."/>
            <person name="Liu Z.A."/>
            <person name="Luros J.S."/>
            <person name="Maiti R."/>
            <person name="Marziali A."/>
            <person name="Militscher J."/>
            <person name="Miranda M."/>
            <person name="Nguyen M."/>
            <person name="Nierman W.C."/>
            <person name="Osborne B.I."/>
            <person name="Pai G."/>
            <person name="Peterson J."/>
            <person name="Pham P.K."/>
            <person name="Rizzo M."/>
            <person name="Rooney T."/>
            <person name="Rowley D."/>
            <person name="Sakano H."/>
            <person name="Salzberg S.L."/>
            <person name="Schwartz J.R."/>
            <person name="Shinn P."/>
            <person name="Southwick A.M."/>
            <person name="Sun H."/>
            <person name="Tallon L.J."/>
            <person name="Tambunga G."/>
            <person name="Toriumi M.J."/>
            <person name="Town C.D."/>
            <person name="Utterback T."/>
            <person name="Van Aken S."/>
            <person name="Vaysberg M."/>
            <person name="Vysotskaia V.S."/>
            <person name="Walker M."/>
            <person name="Wu D."/>
            <person name="Yu G."/>
            <person name="Fraser C.M."/>
            <person name="Venter J.C."/>
            <person name="Davis R.W."/>
        </authorList>
    </citation>
    <scope>NUCLEOTIDE SEQUENCE [LARGE SCALE GENOMIC DNA]</scope>
    <source>
        <strain>cv. Columbia</strain>
    </source>
</reference>
<reference key="4">
    <citation type="journal article" date="2017" name="Plant J.">
        <title>Araport11: a complete reannotation of the Arabidopsis thaliana reference genome.</title>
        <authorList>
            <person name="Cheng C.Y."/>
            <person name="Krishnakumar V."/>
            <person name="Chan A.P."/>
            <person name="Thibaud-Nissen F."/>
            <person name="Schobel S."/>
            <person name="Town C.D."/>
        </authorList>
    </citation>
    <scope>GENOME REANNOTATION</scope>
    <source>
        <strain>cv. Columbia</strain>
    </source>
</reference>
<reference key="5">
    <citation type="journal article" date="2003" name="Science">
        <title>Empirical analysis of transcriptional activity in the Arabidopsis genome.</title>
        <authorList>
            <person name="Yamada K."/>
            <person name="Lim J."/>
            <person name="Dale J.M."/>
            <person name="Chen H."/>
            <person name="Shinn P."/>
            <person name="Palm C.J."/>
            <person name="Southwick A.M."/>
            <person name="Wu H.C."/>
            <person name="Kim C.J."/>
            <person name="Nguyen M."/>
            <person name="Pham P.K."/>
            <person name="Cheuk R.F."/>
            <person name="Karlin-Newmann G."/>
            <person name="Liu S.X."/>
            <person name="Lam B."/>
            <person name="Sakano H."/>
            <person name="Wu T."/>
            <person name="Yu G."/>
            <person name="Miranda M."/>
            <person name="Quach H.L."/>
            <person name="Tripp M."/>
            <person name="Chang C.H."/>
            <person name="Lee J.M."/>
            <person name="Toriumi M.J."/>
            <person name="Chan M.M."/>
            <person name="Tang C.C."/>
            <person name="Onodera C.S."/>
            <person name="Deng J.M."/>
            <person name="Akiyama K."/>
            <person name="Ansari Y."/>
            <person name="Arakawa T."/>
            <person name="Banh J."/>
            <person name="Banno F."/>
            <person name="Bowser L."/>
            <person name="Brooks S.Y."/>
            <person name="Carninci P."/>
            <person name="Chao Q."/>
            <person name="Choy N."/>
            <person name="Enju A."/>
            <person name="Goldsmith A.D."/>
            <person name="Gurjal M."/>
            <person name="Hansen N.F."/>
            <person name="Hayashizaki Y."/>
            <person name="Johnson-Hopson C."/>
            <person name="Hsuan V.W."/>
            <person name="Iida K."/>
            <person name="Karnes M."/>
            <person name="Khan S."/>
            <person name="Koesema E."/>
            <person name="Ishida J."/>
            <person name="Jiang P.X."/>
            <person name="Jones T."/>
            <person name="Kawai J."/>
            <person name="Kamiya A."/>
            <person name="Meyers C."/>
            <person name="Nakajima M."/>
            <person name="Narusaka M."/>
            <person name="Seki M."/>
            <person name="Sakurai T."/>
            <person name="Satou M."/>
            <person name="Tamse R."/>
            <person name="Vaysberg M."/>
            <person name="Wallender E.K."/>
            <person name="Wong C."/>
            <person name="Yamamura Y."/>
            <person name="Yuan S."/>
            <person name="Shinozaki K."/>
            <person name="Davis R.W."/>
            <person name="Theologis A."/>
            <person name="Ecker J.R."/>
        </authorList>
    </citation>
    <scope>NUCLEOTIDE SEQUENCE [LARGE SCALE MRNA]</scope>
    <source>
        <strain>cv. Columbia</strain>
    </source>
</reference>
<reference key="6">
    <citation type="submission" date="2002-03" db="EMBL/GenBank/DDBJ databases">
        <title>Full-length cDNA from Arabidopsis thaliana.</title>
        <authorList>
            <person name="Brover V.V."/>
            <person name="Troukhan M.E."/>
            <person name="Alexandrov N.A."/>
            <person name="Lu Y.-P."/>
            <person name="Flavell R.B."/>
            <person name="Feldmann K.A."/>
        </authorList>
    </citation>
    <scope>NUCLEOTIDE SEQUENCE [LARGE SCALE MRNA]</scope>
</reference>
<reference key="7">
    <citation type="journal article" date="2015" name="Plant Cell">
        <title>MET1 is a thylakoid-associated TPR protein involved in photosystem II supercomplex formation and repair in Arabidopsis.</title>
        <authorList>
            <person name="Bhuiyan N.H."/>
            <person name="Friso G."/>
            <person name="Poliakov A."/>
            <person name="Ponnala L."/>
            <person name="van Wijk K.J."/>
        </authorList>
    </citation>
    <scope>FUNCTION</scope>
    <scope>DISRUPTION PHENOTYPE</scope>
    <scope>SUBCELLULAR LOCATION</scope>
    <scope>INDUCTION BY LIGHT</scope>
    <scope>SUBUNIT</scope>
    <scope>INTERACTION WITH PSBB AND PSBC</scope>
    <source>
        <strain>cv. Columbia</strain>
    </source>
</reference>
<feature type="transit peptide" description="Chloroplast" evidence="1">
    <location>
        <begin position="1"/>
        <end position="73"/>
    </location>
</feature>
<feature type="chain" id="PRO_0000440118" description="Protein MET1, chloroplastic">
    <location>
        <begin position="74"/>
        <end position="335"/>
    </location>
</feature>
<feature type="domain" description="PDZ" evidence="2">
    <location>
        <begin position="97"/>
        <end position="136"/>
    </location>
</feature>
<feature type="repeat" description="TPR 1" evidence="1 3">
    <location>
        <begin position="217"/>
        <end position="250"/>
    </location>
</feature>
<feature type="repeat" description="TPR 2" evidence="1">
    <location>
        <begin position="254"/>
        <end position="287"/>
    </location>
</feature>
<feature type="repeat" description="TPR 3" evidence="1">
    <location>
        <begin position="289"/>
        <end position="323"/>
    </location>
</feature>
<feature type="region of interest" description="Disordered" evidence="4">
    <location>
        <begin position="1"/>
        <end position="29"/>
    </location>
</feature>
<feature type="region of interest" description="Disordered" evidence="4">
    <location>
        <begin position="66"/>
        <end position="88"/>
    </location>
</feature>
<feature type="compositionally biased region" description="Low complexity" evidence="4">
    <location>
        <begin position="1"/>
        <end position="18"/>
    </location>
</feature>
<feature type="compositionally biased region" description="Polar residues" evidence="4">
    <location>
        <begin position="19"/>
        <end position="29"/>
    </location>
</feature>
<feature type="compositionally biased region" description="Acidic residues" evidence="4">
    <location>
        <begin position="78"/>
        <end position="88"/>
    </location>
</feature>
<feature type="sequence conflict" description="In Ref. 6; AAM66135." evidence="10" ref="6">
    <original>G</original>
    <variation>C</variation>
    <location>
        <position position="161"/>
    </location>
</feature>
<protein>
    <recommendedName>
        <fullName evidence="8">Protein MET1, chloroplastic</fullName>
    </recommendedName>
    <alternativeName>
        <fullName evidence="7">PDZ domain, K-box domain, and TPR region containing protein</fullName>
    </alternativeName>
</protein>
<proteinExistence type="evidence at protein level"/>
<accession>Q94BS2</accession>
<accession>Q8L972</accession>
<accession>Q9ZVU6</accession>
<organism>
    <name type="scientific">Arabidopsis thaliana</name>
    <name type="common">Mouse-ear cress</name>
    <dbReference type="NCBI Taxonomy" id="3702"/>
    <lineage>
        <taxon>Eukaryota</taxon>
        <taxon>Viridiplantae</taxon>
        <taxon>Streptophyta</taxon>
        <taxon>Embryophyta</taxon>
        <taxon>Tracheophyta</taxon>
        <taxon>Spermatophyta</taxon>
        <taxon>Magnoliopsida</taxon>
        <taxon>eudicotyledons</taxon>
        <taxon>Gunneridae</taxon>
        <taxon>Pentapetalae</taxon>
        <taxon>rosids</taxon>
        <taxon>malvids</taxon>
        <taxon>Brassicales</taxon>
        <taxon>Brassicaceae</taxon>
        <taxon>Camelineae</taxon>
        <taxon>Arabidopsis</taxon>
    </lineage>
</organism>
<evidence type="ECO:0000255" key="1"/>
<evidence type="ECO:0000255" key="2">
    <source>
        <dbReference type="PROSITE-ProRule" id="PRU00143"/>
    </source>
</evidence>
<evidence type="ECO:0000255" key="3">
    <source>
        <dbReference type="PROSITE-ProRule" id="PRU00339"/>
    </source>
</evidence>
<evidence type="ECO:0000256" key="4">
    <source>
        <dbReference type="SAM" id="MobiDB-lite"/>
    </source>
</evidence>
<evidence type="ECO:0000269" key="5">
    <source>
    </source>
</evidence>
<evidence type="ECO:0000269" key="6">
    <source>
    </source>
</evidence>
<evidence type="ECO:0000303" key="7">
    <source>
    </source>
</evidence>
<evidence type="ECO:0000303" key="8">
    <source>
    </source>
</evidence>
<evidence type="ECO:0000303" key="9">
    <source ref="2"/>
</evidence>
<evidence type="ECO:0000305" key="10"/>
<evidence type="ECO:0000312" key="11">
    <source>
        <dbReference type="Araport" id="AT1G55480"/>
    </source>
</evidence>
<evidence type="ECO:0000312" key="12">
    <source>
        <dbReference type="EMBL" id="AAD10648.1"/>
    </source>
</evidence>
<gene>
    <name evidence="8" type="primary">MET1</name>
    <name evidence="9" type="synonym">GAN</name>
    <name evidence="7" type="synonym">ZKT</name>
    <name evidence="11" type="ordered locus">At1g55480</name>
    <name evidence="12" type="ORF">T5A14.12</name>
</gene>
<name>MET1_ARATH</name>
<sequence>MSLAPSSYPSLYSSPSLPRTQQTKQNPSLITQSSFISAKSLFLSSNSASLCNTHVAKRRNLALKASETESSAKAEAGGDGEEEEKYETYEIEVEQPYGLKFRKGRDGGTYIDAILPGGSADKTGKFTVGDRVIATSAVFGTEIWPAAEYGRTMYTIRQRIGPLLMQMEKRNGKAEDTGELTEKEIIRAERNAGYISSRLREIQMQNYLKKKEQKAQREKDLREGLQFSKNGKYEEALERFESVLGSKPTPEEASVASYNVACCYSKLNQVQAGLSALEEALKSGYEDFKRIRSDPDLETLRKSKDFDPLLKQFDESFINESAINAIKSLFGFNKK</sequence>
<dbReference type="EMBL" id="AB190499">
    <property type="protein sequence ID" value="BAD99102.1"/>
    <property type="molecule type" value="mRNA"/>
</dbReference>
<dbReference type="EMBL" id="AY986818">
    <property type="protein sequence ID" value="AAY42135.1"/>
    <property type="molecule type" value="mRNA"/>
</dbReference>
<dbReference type="EMBL" id="AC005223">
    <property type="protein sequence ID" value="AAD10648.1"/>
    <property type="status" value="ALT_SEQ"/>
    <property type="molecule type" value="Genomic_DNA"/>
</dbReference>
<dbReference type="EMBL" id="CP002684">
    <property type="protein sequence ID" value="AEE33250.1"/>
    <property type="molecule type" value="Genomic_DNA"/>
</dbReference>
<dbReference type="EMBL" id="AY039926">
    <property type="protein sequence ID" value="AAK64030.1"/>
    <property type="molecule type" value="mRNA"/>
</dbReference>
<dbReference type="EMBL" id="AY079359">
    <property type="protein sequence ID" value="AAL85090.1"/>
    <property type="molecule type" value="mRNA"/>
</dbReference>
<dbReference type="EMBL" id="AY088606">
    <property type="protein sequence ID" value="AAM66135.1"/>
    <property type="molecule type" value="mRNA"/>
</dbReference>
<dbReference type="PIR" id="A96597">
    <property type="entry name" value="A96597"/>
</dbReference>
<dbReference type="RefSeq" id="NP_564691.1">
    <property type="nucleotide sequence ID" value="NM_104423.4"/>
</dbReference>
<dbReference type="SMR" id="Q94BS2"/>
<dbReference type="FunCoup" id="Q94BS2">
    <property type="interactions" value="1400"/>
</dbReference>
<dbReference type="STRING" id="3702.Q94BS2"/>
<dbReference type="GlyGen" id="Q94BS2">
    <property type="glycosylation" value="1 site"/>
</dbReference>
<dbReference type="iPTMnet" id="Q94BS2"/>
<dbReference type="PaxDb" id="3702-AT1G55480.1"/>
<dbReference type="ProteomicsDB" id="232285"/>
<dbReference type="EnsemblPlants" id="AT1G55480.1">
    <property type="protein sequence ID" value="AT1G55480.1"/>
    <property type="gene ID" value="AT1G55480"/>
</dbReference>
<dbReference type="GeneID" id="841995"/>
<dbReference type="Gramene" id="AT1G55480.1">
    <property type="protein sequence ID" value="AT1G55480.1"/>
    <property type="gene ID" value="AT1G55480"/>
</dbReference>
<dbReference type="KEGG" id="ath:AT1G55480"/>
<dbReference type="Araport" id="AT1G55480"/>
<dbReference type="TAIR" id="AT1G55480">
    <property type="gene designation" value="ZKT"/>
</dbReference>
<dbReference type="eggNOG" id="ENOG502QQQU">
    <property type="taxonomic scope" value="Eukaryota"/>
</dbReference>
<dbReference type="HOGENOM" id="CLU_053421_2_0_1"/>
<dbReference type="InParanoid" id="Q94BS2"/>
<dbReference type="OMA" id="NIACCFS"/>
<dbReference type="OrthoDB" id="439127at2759"/>
<dbReference type="PhylomeDB" id="Q94BS2"/>
<dbReference type="PRO" id="PR:Q94BS2"/>
<dbReference type="Proteomes" id="UP000006548">
    <property type="component" value="Chromosome 1"/>
</dbReference>
<dbReference type="ExpressionAtlas" id="Q94BS2">
    <property type="expression patterns" value="baseline and differential"/>
</dbReference>
<dbReference type="GO" id="GO:0009507">
    <property type="term" value="C:chloroplast"/>
    <property type="evidence" value="ECO:0007005"/>
    <property type="project" value="TAIR"/>
</dbReference>
<dbReference type="GO" id="GO:0009941">
    <property type="term" value="C:chloroplast envelope"/>
    <property type="evidence" value="ECO:0007005"/>
    <property type="project" value="TAIR"/>
</dbReference>
<dbReference type="GO" id="GO:0031969">
    <property type="term" value="C:chloroplast membrane"/>
    <property type="evidence" value="ECO:0000314"/>
    <property type="project" value="UniProtKB"/>
</dbReference>
<dbReference type="GO" id="GO:0009570">
    <property type="term" value="C:chloroplast stroma"/>
    <property type="evidence" value="ECO:0000314"/>
    <property type="project" value="UniProtKB"/>
</dbReference>
<dbReference type="GO" id="GO:0009534">
    <property type="term" value="C:chloroplast thylakoid"/>
    <property type="evidence" value="ECO:0007005"/>
    <property type="project" value="TAIR"/>
</dbReference>
<dbReference type="GO" id="GO:0009535">
    <property type="term" value="C:chloroplast thylakoid membrane"/>
    <property type="evidence" value="ECO:0007005"/>
    <property type="project" value="TAIR"/>
</dbReference>
<dbReference type="GO" id="GO:0009575">
    <property type="term" value="C:chromoplast stroma"/>
    <property type="evidence" value="ECO:0000314"/>
    <property type="project" value="TAIR"/>
</dbReference>
<dbReference type="GO" id="GO:0005634">
    <property type="term" value="C:nucleus"/>
    <property type="evidence" value="ECO:0007005"/>
    <property type="project" value="TAIR"/>
</dbReference>
<dbReference type="GO" id="GO:0009523">
    <property type="term" value="C:photosystem II"/>
    <property type="evidence" value="ECO:0007669"/>
    <property type="project" value="UniProtKB-KW"/>
</dbReference>
<dbReference type="GO" id="GO:0098572">
    <property type="term" value="C:stromal side of plastid thylakoid membrane"/>
    <property type="evidence" value="ECO:0000314"/>
    <property type="project" value="UniProtKB"/>
</dbReference>
<dbReference type="GO" id="GO:0009579">
    <property type="term" value="C:thylakoid"/>
    <property type="evidence" value="ECO:0000314"/>
    <property type="project" value="TAIR"/>
</dbReference>
<dbReference type="GO" id="GO:0015979">
    <property type="term" value="P:photosynthesis"/>
    <property type="evidence" value="ECO:0000315"/>
    <property type="project" value="TAIR"/>
</dbReference>
<dbReference type="GO" id="GO:0010207">
    <property type="term" value="P:photosystem II assembly"/>
    <property type="evidence" value="ECO:0000314"/>
    <property type="project" value="UniProtKB"/>
</dbReference>
<dbReference type="GO" id="GO:0010206">
    <property type="term" value="P:photosystem II repair"/>
    <property type="evidence" value="ECO:0000314"/>
    <property type="project" value="UniProtKB"/>
</dbReference>
<dbReference type="GO" id="GO:0009644">
    <property type="term" value="P:response to high light intensity"/>
    <property type="evidence" value="ECO:0000315"/>
    <property type="project" value="UniProtKB"/>
</dbReference>
<dbReference type="GO" id="GO:0009416">
    <property type="term" value="P:response to light stimulus"/>
    <property type="evidence" value="ECO:0000315"/>
    <property type="project" value="TAIR"/>
</dbReference>
<dbReference type="GO" id="GO:0009611">
    <property type="term" value="P:response to wounding"/>
    <property type="evidence" value="ECO:0000270"/>
    <property type="project" value="TAIR"/>
</dbReference>
<dbReference type="CDD" id="cd00136">
    <property type="entry name" value="PDZ_canonical"/>
    <property type="match status" value="1"/>
</dbReference>
<dbReference type="Gene3D" id="2.30.42.10">
    <property type="match status" value="1"/>
</dbReference>
<dbReference type="Gene3D" id="1.25.40.10">
    <property type="entry name" value="Tetratricopeptide repeat domain"/>
    <property type="match status" value="1"/>
</dbReference>
<dbReference type="InterPro" id="IPR001478">
    <property type="entry name" value="PDZ"/>
</dbReference>
<dbReference type="InterPro" id="IPR036034">
    <property type="entry name" value="PDZ_sf"/>
</dbReference>
<dbReference type="InterPro" id="IPR011990">
    <property type="entry name" value="TPR-like_helical_dom_sf"/>
</dbReference>
<dbReference type="InterPro" id="IPR019734">
    <property type="entry name" value="TPR_rpt"/>
</dbReference>
<dbReference type="NCBIfam" id="NF047558">
    <property type="entry name" value="TPR_END_plus"/>
    <property type="match status" value="1"/>
</dbReference>
<dbReference type="PANTHER" id="PTHR47661">
    <property type="entry name" value="PHOSPHOGLUCAN PHOSPHATASE LSF1, CHLOROPLASTIC"/>
    <property type="match status" value="1"/>
</dbReference>
<dbReference type="PANTHER" id="PTHR47661:SF3">
    <property type="entry name" value="PROTEIN CONTAINING PDZ DOMAIN, A K-BOX DOMAIN, AND A TPR REGION"/>
    <property type="match status" value="1"/>
</dbReference>
<dbReference type="SUPFAM" id="SSF50156">
    <property type="entry name" value="PDZ domain-like"/>
    <property type="match status" value="1"/>
</dbReference>
<dbReference type="SUPFAM" id="SSF48452">
    <property type="entry name" value="TPR-like"/>
    <property type="match status" value="1"/>
</dbReference>
<dbReference type="PROSITE" id="PS50106">
    <property type="entry name" value="PDZ"/>
    <property type="match status" value="1"/>
</dbReference>
<dbReference type="PROSITE" id="PS50005">
    <property type="entry name" value="TPR"/>
    <property type="match status" value="1"/>
</dbReference>
<dbReference type="PROSITE" id="PS50293">
    <property type="entry name" value="TPR_REGION"/>
    <property type="match status" value="1"/>
</dbReference>
<keyword id="KW-0143">Chaperone</keyword>
<keyword id="KW-0150">Chloroplast</keyword>
<keyword id="KW-0472">Membrane</keyword>
<keyword id="KW-0602">Photosynthesis</keyword>
<keyword id="KW-0604">Photosystem II</keyword>
<keyword id="KW-0934">Plastid</keyword>
<keyword id="KW-1185">Reference proteome</keyword>
<keyword id="KW-0677">Repeat</keyword>
<keyword id="KW-0793">Thylakoid</keyword>
<keyword id="KW-0802">TPR repeat</keyword>
<keyword id="KW-0809">Transit peptide</keyword>